<accession>P0C9N2</accession>
<reference key="1">
    <citation type="submission" date="2003-03" db="EMBL/GenBank/DDBJ databases">
        <title>African swine fever virus genomes.</title>
        <authorList>
            <person name="Kutish G.F."/>
            <person name="Rock D.L."/>
        </authorList>
    </citation>
    <scope>NUCLEOTIDE SEQUENCE [LARGE SCALE GENOMIC DNA]</scope>
</reference>
<organismHost>
    <name type="scientific">Ornithodoros</name>
    <name type="common">relapsing fever ticks</name>
    <dbReference type="NCBI Taxonomy" id="6937"/>
</organismHost>
<organismHost>
    <name type="scientific">Phacochoerus aethiopicus</name>
    <name type="common">Warthog</name>
    <dbReference type="NCBI Taxonomy" id="85517"/>
</organismHost>
<organismHost>
    <name type="scientific">Phacochoerus africanus</name>
    <name type="common">Warthog</name>
    <dbReference type="NCBI Taxonomy" id="41426"/>
</organismHost>
<organismHost>
    <name type="scientific">Potamochoerus larvatus</name>
    <name type="common">Bushpig</name>
    <dbReference type="NCBI Taxonomy" id="273792"/>
</organismHost>
<organismHost>
    <name type="scientific">Sus scrofa</name>
    <name type="common">Pig</name>
    <dbReference type="NCBI Taxonomy" id="9823"/>
</organismHost>
<gene>
    <name type="ordered locus">Pret-025</name>
</gene>
<evidence type="ECO:0000250" key="1"/>
<evidence type="ECO:0000305" key="2"/>
<sequence>MNSLQVLTKKVLIENKAFSNYHEDDIFILQQLGLWWHNGPIGFCKQCKMVTSGSMSCSDVDSYELDRALVRAVKKNQTDLIKLFVLWGANINYGIICAKTERTKVLCIQLGADPKFLDVGLYNLFVDLIKQQKVLLAIDIYYDNISILDRFDSHDFYVLIDFIYNCFILNLDEKEKMIKNTYVLKFWFKIAIEFNLIKPIRFLSKKFPHLDDWRLKTAVYLGNVDEIHHAYFQENIRLDPNDMMPLACMYPQNKLGIYYCFALGANINTALETLIRYINHEVNGEITFFSNYGIWSNVHFCISLGANPYTKKIQETLLRQEKNVIMKLLFRKGLLSPHSILHKKILEPSEVRKIISTYEYTETFHSFSLLRDNLR</sequence>
<protein>
    <recommendedName>
        <fullName>Protein MGF 360-5L</fullName>
    </recommendedName>
</protein>
<organism>
    <name type="scientific">African swine fever virus (isolate Tick/South Africa/Pretoriuskop Pr4/1996)</name>
    <name type="common">ASFV</name>
    <dbReference type="NCBI Taxonomy" id="561443"/>
    <lineage>
        <taxon>Viruses</taxon>
        <taxon>Varidnaviria</taxon>
        <taxon>Bamfordvirae</taxon>
        <taxon>Nucleocytoviricota</taxon>
        <taxon>Pokkesviricetes</taxon>
        <taxon>Asfuvirales</taxon>
        <taxon>Asfarviridae</taxon>
        <taxon>Asfivirus</taxon>
        <taxon>African swine fever virus</taxon>
    </lineage>
</organism>
<comment type="function">
    <text evidence="1">Plays a role in virus cell tropism, and may be required for efficient virus replication in macrophages.</text>
</comment>
<comment type="similarity">
    <text evidence="2">Belongs to the asfivirus MGF 360 family.</text>
</comment>
<feature type="chain" id="PRO_0000373259" description="Protein MGF 360-5L">
    <location>
        <begin position="1"/>
        <end position="375"/>
    </location>
</feature>
<proteinExistence type="inferred from homology"/>
<name>3605L_ASFP4</name>
<dbReference type="EMBL" id="AY261363">
    <property type="status" value="NOT_ANNOTATED_CDS"/>
    <property type="molecule type" value="Genomic_DNA"/>
</dbReference>
<dbReference type="SMR" id="P0C9N2"/>
<dbReference type="Proteomes" id="UP000000859">
    <property type="component" value="Segment"/>
</dbReference>
<dbReference type="GO" id="GO:0042330">
    <property type="term" value="P:taxis"/>
    <property type="evidence" value="ECO:0007669"/>
    <property type="project" value="InterPro"/>
</dbReference>
<dbReference type="InterPro" id="IPR002595">
    <property type="entry name" value="ASFV_MGF360"/>
</dbReference>
<dbReference type="Pfam" id="PF01671">
    <property type="entry name" value="ASFV_360"/>
    <property type="match status" value="1"/>
</dbReference>